<evidence type="ECO:0000250" key="1">
    <source>
        <dbReference type="UniProtKB" id="P62166"/>
    </source>
</evidence>
<evidence type="ECO:0000255" key="2"/>
<evidence type="ECO:0000255" key="3">
    <source>
        <dbReference type="PROSITE-ProRule" id="PRU00448"/>
    </source>
</evidence>
<evidence type="ECO:0000269" key="4">
    <source>
    </source>
</evidence>
<evidence type="ECO:0000303" key="5">
    <source>
    </source>
</evidence>
<evidence type="ECO:0000305" key="6">
    <source>
    </source>
</evidence>
<evidence type="ECO:0000312" key="7">
    <source>
        <dbReference type="EMBL" id="AAZ66779.2"/>
    </source>
</evidence>
<feature type="initiator methionine" description="Removed" evidence="2">
    <location>
        <position position="1"/>
    </location>
</feature>
<feature type="chain" id="PRO_0000423516" description="Neuronal calcium sensor 1" evidence="2">
    <location>
        <begin position="2"/>
        <end position="191"/>
    </location>
</feature>
<feature type="domain" description="EF-hand 1" evidence="1">
    <location>
        <begin position="24"/>
        <end position="59"/>
    </location>
</feature>
<feature type="domain" description="EF-hand 2" evidence="3">
    <location>
        <begin position="60"/>
        <end position="95"/>
    </location>
</feature>
<feature type="domain" description="EF-hand 3" evidence="3">
    <location>
        <begin position="96"/>
        <end position="131"/>
    </location>
</feature>
<feature type="domain" description="EF-hand 4" evidence="3">
    <location>
        <begin position="144"/>
        <end position="179"/>
    </location>
</feature>
<feature type="binding site" evidence="3">
    <location>
        <position position="73"/>
    </location>
    <ligand>
        <name>Ca(2+)</name>
        <dbReference type="ChEBI" id="CHEBI:29108"/>
        <label>1</label>
    </ligand>
</feature>
<feature type="binding site" evidence="3">
    <location>
        <position position="75"/>
    </location>
    <ligand>
        <name>Ca(2+)</name>
        <dbReference type="ChEBI" id="CHEBI:29108"/>
        <label>1</label>
    </ligand>
</feature>
<feature type="binding site" evidence="3">
    <location>
        <position position="77"/>
    </location>
    <ligand>
        <name>Ca(2+)</name>
        <dbReference type="ChEBI" id="CHEBI:29108"/>
        <label>1</label>
    </ligand>
</feature>
<feature type="binding site" evidence="3">
    <location>
        <position position="84"/>
    </location>
    <ligand>
        <name>Ca(2+)</name>
        <dbReference type="ChEBI" id="CHEBI:29108"/>
        <label>1</label>
    </ligand>
</feature>
<feature type="binding site" evidence="3">
    <location>
        <position position="109"/>
    </location>
    <ligand>
        <name>Ca(2+)</name>
        <dbReference type="ChEBI" id="CHEBI:29108"/>
        <label>2</label>
    </ligand>
</feature>
<feature type="binding site" evidence="3">
    <location>
        <position position="111"/>
    </location>
    <ligand>
        <name>Ca(2+)</name>
        <dbReference type="ChEBI" id="CHEBI:29108"/>
        <label>2</label>
    </ligand>
</feature>
<feature type="binding site" evidence="3">
    <location>
        <position position="113"/>
    </location>
    <ligand>
        <name>Ca(2+)</name>
        <dbReference type="ChEBI" id="CHEBI:29108"/>
        <label>2</label>
    </ligand>
</feature>
<feature type="binding site" evidence="3">
    <location>
        <position position="115"/>
    </location>
    <ligand>
        <name>Ca(2+)</name>
        <dbReference type="ChEBI" id="CHEBI:29108"/>
        <label>2</label>
    </ligand>
</feature>
<feature type="binding site" evidence="3">
    <location>
        <position position="120"/>
    </location>
    <ligand>
        <name>Ca(2+)</name>
        <dbReference type="ChEBI" id="CHEBI:29108"/>
        <label>2</label>
    </ligand>
</feature>
<feature type="binding site" evidence="3">
    <location>
        <position position="157"/>
    </location>
    <ligand>
        <name>Ca(2+)</name>
        <dbReference type="ChEBI" id="CHEBI:29108"/>
        <label>3</label>
    </ligand>
</feature>
<feature type="binding site" evidence="3">
    <location>
        <position position="159"/>
    </location>
    <ligand>
        <name>Ca(2+)</name>
        <dbReference type="ChEBI" id="CHEBI:29108"/>
        <label>3</label>
    </ligand>
</feature>
<feature type="binding site" evidence="3">
    <location>
        <position position="161"/>
    </location>
    <ligand>
        <name>Ca(2+)</name>
        <dbReference type="ChEBI" id="CHEBI:29108"/>
        <label>3</label>
    </ligand>
</feature>
<feature type="binding site" evidence="3">
    <location>
        <position position="163"/>
    </location>
    <ligand>
        <name>Ca(2+)</name>
        <dbReference type="ChEBI" id="CHEBI:29108"/>
        <label>3</label>
    </ligand>
</feature>
<feature type="binding site" evidence="3">
    <location>
        <position position="168"/>
    </location>
    <ligand>
        <name>Ca(2+)</name>
        <dbReference type="ChEBI" id="CHEBI:29108"/>
        <label>3</label>
    </ligand>
</feature>
<feature type="lipid moiety-binding region" description="N-myristoyl glycine" evidence="2">
    <location>
        <position position="2"/>
    </location>
</feature>
<protein>
    <recommendedName>
        <fullName evidence="7">Neuronal calcium sensor 1</fullName>
        <shortName evidence="5">NCS-1</shortName>
    </recommendedName>
</protein>
<dbReference type="EMBL" id="DQ099793">
    <property type="protein sequence ID" value="AAZ66779.2"/>
    <property type="molecule type" value="mRNA"/>
</dbReference>
<dbReference type="SMR" id="Q3YLA4"/>
<dbReference type="GO" id="GO:0030426">
    <property type="term" value="C:growth cone"/>
    <property type="evidence" value="ECO:0007669"/>
    <property type="project" value="UniProtKB-SubCell"/>
</dbReference>
<dbReference type="GO" id="GO:0043204">
    <property type="term" value="C:perikaryon"/>
    <property type="evidence" value="ECO:0007669"/>
    <property type="project" value="UniProtKB-SubCell"/>
</dbReference>
<dbReference type="GO" id="GO:0005509">
    <property type="term" value="F:calcium ion binding"/>
    <property type="evidence" value="ECO:0007669"/>
    <property type="project" value="InterPro"/>
</dbReference>
<dbReference type="GO" id="GO:0008048">
    <property type="term" value="F:calcium sensitive guanylate cyclase activator activity"/>
    <property type="evidence" value="ECO:0007669"/>
    <property type="project" value="TreeGrafter"/>
</dbReference>
<dbReference type="GO" id="GO:0007399">
    <property type="term" value="P:nervous system development"/>
    <property type="evidence" value="ECO:0007669"/>
    <property type="project" value="UniProtKB-KW"/>
</dbReference>
<dbReference type="CDD" id="cd00051">
    <property type="entry name" value="EFh"/>
    <property type="match status" value="2"/>
</dbReference>
<dbReference type="FunFam" id="1.10.238.10:FF:000009">
    <property type="entry name" value="Visinin-like protein 1"/>
    <property type="match status" value="1"/>
</dbReference>
<dbReference type="Gene3D" id="1.10.238.10">
    <property type="entry name" value="EF-hand"/>
    <property type="match status" value="1"/>
</dbReference>
<dbReference type="InterPro" id="IPR011992">
    <property type="entry name" value="EF-hand-dom_pair"/>
</dbReference>
<dbReference type="InterPro" id="IPR018247">
    <property type="entry name" value="EF_Hand_1_Ca_BS"/>
</dbReference>
<dbReference type="InterPro" id="IPR002048">
    <property type="entry name" value="EF_hand_dom"/>
</dbReference>
<dbReference type="InterPro" id="IPR028846">
    <property type="entry name" value="Recoverin"/>
</dbReference>
<dbReference type="PANTHER" id="PTHR23055">
    <property type="entry name" value="CALCIUM BINDING PROTEINS"/>
    <property type="match status" value="1"/>
</dbReference>
<dbReference type="PANTHER" id="PTHR23055:SF198">
    <property type="entry name" value="NEURONAL CALCIUM SENSOR 1"/>
    <property type="match status" value="1"/>
</dbReference>
<dbReference type="Pfam" id="PF00036">
    <property type="entry name" value="EF-hand_1"/>
    <property type="match status" value="1"/>
</dbReference>
<dbReference type="Pfam" id="PF13499">
    <property type="entry name" value="EF-hand_7"/>
    <property type="match status" value="1"/>
</dbReference>
<dbReference type="PRINTS" id="PR00450">
    <property type="entry name" value="RECOVERIN"/>
</dbReference>
<dbReference type="SMART" id="SM00054">
    <property type="entry name" value="EFh"/>
    <property type="match status" value="3"/>
</dbReference>
<dbReference type="SUPFAM" id="SSF47473">
    <property type="entry name" value="EF-hand"/>
    <property type="match status" value="1"/>
</dbReference>
<dbReference type="PROSITE" id="PS00018">
    <property type="entry name" value="EF_HAND_1"/>
    <property type="match status" value="3"/>
</dbReference>
<dbReference type="PROSITE" id="PS50222">
    <property type="entry name" value="EF_HAND_2"/>
    <property type="match status" value="3"/>
</dbReference>
<sequence>MGKRASKLRPEEVDELKAHTYFTESEIKQWHKGFRKDCPDGKLTLEGFTKIYQQFFPFGDPSKFANFVFNVFDENKDGFISFSEFLQALSVTSRGTVEEKLKWAFRLYDLDNDGYITRDELLDIVDAIYRMVGESVTLPEEENTPEKRVNRIFQVMDKNKDDQLTFEEFLEGSKEDPTIIQALTLCDSGQA</sequence>
<organism>
    <name type="scientific">Lymnaea stagnalis</name>
    <name type="common">Great pond snail</name>
    <name type="synonym">Helix stagnalis</name>
    <dbReference type="NCBI Taxonomy" id="6523"/>
    <lineage>
        <taxon>Eukaryota</taxon>
        <taxon>Metazoa</taxon>
        <taxon>Spiralia</taxon>
        <taxon>Lophotrochozoa</taxon>
        <taxon>Mollusca</taxon>
        <taxon>Gastropoda</taxon>
        <taxon>Heterobranchia</taxon>
        <taxon>Euthyneura</taxon>
        <taxon>Panpulmonata</taxon>
        <taxon>Hygrophila</taxon>
        <taxon>Lymnaeoidea</taxon>
        <taxon>Lymnaeidae</taxon>
        <taxon>Lymnaea</taxon>
    </lineage>
</organism>
<comment type="function">
    <text evidence="1 4">Neuronal calcium sensor, regulator of G protein-coupled receptor phosphorylation in a calcium dependent manner (By similarity). Regulates neurite extension and branching by activity-dependent Ca(2+) influx in growth cones.</text>
</comment>
<comment type="subcellular location">
    <subcellularLocation>
        <location evidence="4">Perikaryon</location>
    </subcellularLocation>
    <subcellularLocation>
        <location evidence="4">Cell projection</location>
    </subcellularLocation>
    <subcellularLocation>
        <location evidence="4">Cell projection</location>
        <location evidence="4">Growth cone</location>
    </subcellularLocation>
    <text evidence="4">In pedal neurons, higher expression in secondary neurites, perikarya, growth cones and branch points than in primary neurites.</text>
</comment>
<comment type="miscellaneous">
    <text evidence="1">Binds 3 calcium ions via the second, third and fourth EF-hand.</text>
</comment>
<comment type="similarity">
    <text evidence="2">Belongs to the recoverin family.</text>
</comment>
<proteinExistence type="evidence at transcript level"/>
<keyword id="KW-0106">Calcium</keyword>
<keyword id="KW-0966">Cell projection</keyword>
<keyword id="KW-0449">Lipoprotein</keyword>
<keyword id="KW-0479">Metal-binding</keyword>
<keyword id="KW-0519">Myristate</keyword>
<keyword id="KW-0524">Neurogenesis</keyword>
<keyword id="KW-0677">Repeat</keyword>
<reference evidence="6 7" key="1">
    <citation type="journal article" date="2007" name="Development">
        <title>Neuronal calcium sensor-1 modulation of optimal calcium level for neurite outgrowth.</title>
        <authorList>
            <person name="Hui K."/>
            <person name="Fei G.H."/>
            <person name="Saab B.J."/>
            <person name="Su J."/>
            <person name="Roder J.C."/>
            <person name="Feng Z.P."/>
        </authorList>
    </citation>
    <scope>NUCLEOTIDE SEQUENCE [MRNA]</scope>
    <scope>FUNCTION</scope>
    <scope>SUBCELLULAR LOCATION</scope>
    <source>
        <tissue evidence="7">CNS</tissue>
    </source>
</reference>
<name>NCS1_LYMST</name>
<accession>Q3YLA4</accession>